<feature type="chain" id="PRO_1000098543" description="Threonine--tRNA ligase">
    <location>
        <begin position="1"/>
        <end position="583"/>
    </location>
</feature>
<feature type="region of interest" description="Catalytic" evidence="1">
    <location>
        <begin position="185"/>
        <end position="478"/>
    </location>
</feature>
<feature type="binding site" evidence="1">
    <location>
        <position position="278"/>
    </location>
    <ligand>
        <name>Zn(2+)</name>
        <dbReference type="ChEBI" id="CHEBI:29105"/>
    </ligand>
</feature>
<feature type="binding site" evidence="1">
    <location>
        <position position="329"/>
    </location>
    <ligand>
        <name>Zn(2+)</name>
        <dbReference type="ChEBI" id="CHEBI:29105"/>
    </ligand>
</feature>
<feature type="binding site" evidence="1">
    <location>
        <position position="455"/>
    </location>
    <ligand>
        <name>Zn(2+)</name>
        <dbReference type="ChEBI" id="CHEBI:29105"/>
    </ligand>
</feature>
<comment type="function">
    <text evidence="1">Catalyzes the attachment of threonine to tRNA(Thr) in a two-step reaction: L-threonine is first activated by ATP to form Thr-AMP and then transferred to the acceptor end of tRNA(Thr). Also edits incorrectly charged L-seryl-tRNA(Thr).</text>
</comment>
<comment type="catalytic activity">
    <reaction evidence="1">
        <text>tRNA(Thr) + L-threonine + ATP = L-threonyl-tRNA(Thr) + AMP + diphosphate + H(+)</text>
        <dbReference type="Rhea" id="RHEA:24624"/>
        <dbReference type="Rhea" id="RHEA-COMP:9670"/>
        <dbReference type="Rhea" id="RHEA-COMP:9704"/>
        <dbReference type="ChEBI" id="CHEBI:15378"/>
        <dbReference type="ChEBI" id="CHEBI:30616"/>
        <dbReference type="ChEBI" id="CHEBI:33019"/>
        <dbReference type="ChEBI" id="CHEBI:57926"/>
        <dbReference type="ChEBI" id="CHEBI:78442"/>
        <dbReference type="ChEBI" id="CHEBI:78534"/>
        <dbReference type="ChEBI" id="CHEBI:456215"/>
        <dbReference type="EC" id="6.1.1.3"/>
    </reaction>
</comment>
<comment type="cofactor">
    <cofactor evidence="1">
        <name>Zn(2+)</name>
        <dbReference type="ChEBI" id="CHEBI:29105"/>
    </cofactor>
    <text evidence="1">Binds 1 zinc ion per subunit.</text>
</comment>
<comment type="subunit">
    <text evidence="1">Homodimer.</text>
</comment>
<comment type="subcellular location">
    <subcellularLocation>
        <location evidence="1">Cytoplasm</location>
    </subcellularLocation>
</comment>
<comment type="similarity">
    <text evidence="1">Belongs to the class-II aminoacyl-tRNA synthetase family.</text>
</comment>
<evidence type="ECO:0000255" key="1">
    <source>
        <dbReference type="HAMAP-Rule" id="MF_00184"/>
    </source>
</evidence>
<reference key="1">
    <citation type="journal article" date="2008" name="PLoS Genet.">
        <title>The genome of Borrelia recurrentis, the agent of deadly louse-borne relapsing fever, is a degraded subset of tick-borne Borrelia duttonii.</title>
        <authorList>
            <person name="Lescot M."/>
            <person name="Audic S."/>
            <person name="Robert C."/>
            <person name="Nguyen T.T."/>
            <person name="Blanc G."/>
            <person name="Cutler S.J."/>
            <person name="Wincker P."/>
            <person name="Couloux A."/>
            <person name="Claverie J.-M."/>
            <person name="Raoult D."/>
            <person name="Drancourt M."/>
        </authorList>
    </citation>
    <scope>NUCLEOTIDE SEQUENCE [LARGE SCALE GENOMIC DNA]</scope>
    <source>
        <strain>Ly</strain>
    </source>
</reference>
<gene>
    <name evidence="1" type="primary">thrS</name>
    <name type="ordered locus">BDU_723</name>
</gene>
<protein>
    <recommendedName>
        <fullName evidence="1">Threonine--tRNA ligase</fullName>
        <ecNumber evidence="1">6.1.1.3</ecNumber>
    </recommendedName>
    <alternativeName>
        <fullName evidence="1">Threonyl-tRNA synthetase</fullName>
        <shortName evidence="1">ThrRS</shortName>
    </alternativeName>
</protein>
<sequence length="583" mass="68508">MGEKLDKDSILYKKRHSIAHVMAEAVLELFPNTKIAIGPPIKDGFYYDFDFEKHISEDDLLLIEHKMREILKTGSPFIREVITREQALVLFKDEPYKIDLIQNFDVTDEITIYKSHKFTDLCRGPHVDNMNKLDPKAFKLTSIAGAYWRGDERNKMLSRIYGTLWNNEKDLKAYLKLQEEIKKRDHRKLGRELNLFSVHDEIGPGLIFFHPHGARIRALIENFWREEHFKNGYDILFTPHIGKSWLWETSGHLDFYKESMFEKIEMDRSDYYVKPMNCPFHIAIYNTDKHSYRDLPFRWAELGTVYRYEKIGAIHGTMRVRGFTQDDAHIICTYEQVNFEVREVLRFAIDMWNKFGFTNLKAYLSTKPEKAVGDDDDWQMAVKVLEKALIDFNIDFDIDEGGGAFYGPKIDLKIIDSLGRAWQMSTIQFDFNLPVRFKMTYTAEDGKEKRPFMIHRALLGSIERFFGILVEHYGGAFPVWLAPLQVVIIPVNSIVEEYALEVLSRFQNEGIRIKFDNYCNMRMNAKIRQYQSKKVPYMFIIGEREVVEGKISIRTRTNEQINGLELKEALEFVKLKISNKEIL</sequence>
<dbReference type="EC" id="6.1.1.3" evidence="1"/>
<dbReference type="EMBL" id="CP000976">
    <property type="protein sequence ID" value="ACH93649.1"/>
    <property type="molecule type" value="Genomic_DNA"/>
</dbReference>
<dbReference type="RefSeq" id="WP_012538458.1">
    <property type="nucleotide sequence ID" value="NC_011229.1"/>
</dbReference>
<dbReference type="SMR" id="B5RMR3"/>
<dbReference type="STRING" id="412419.BDU_723"/>
<dbReference type="KEGG" id="bdu:BDU_723"/>
<dbReference type="eggNOG" id="COG0441">
    <property type="taxonomic scope" value="Bacteria"/>
</dbReference>
<dbReference type="HOGENOM" id="CLU_008554_3_1_12"/>
<dbReference type="OrthoDB" id="9802304at2"/>
<dbReference type="Proteomes" id="UP000000611">
    <property type="component" value="Chromosome"/>
</dbReference>
<dbReference type="GO" id="GO:0005737">
    <property type="term" value="C:cytoplasm"/>
    <property type="evidence" value="ECO:0007669"/>
    <property type="project" value="UniProtKB-SubCell"/>
</dbReference>
<dbReference type="GO" id="GO:0005524">
    <property type="term" value="F:ATP binding"/>
    <property type="evidence" value="ECO:0007669"/>
    <property type="project" value="UniProtKB-UniRule"/>
</dbReference>
<dbReference type="GO" id="GO:0046872">
    <property type="term" value="F:metal ion binding"/>
    <property type="evidence" value="ECO:0007669"/>
    <property type="project" value="UniProtKB-KW"/>
</dbReference>
<dbReference type="GO" id="GO:0004829">
    <property type="term" value="F:threonine-tRNA ligase activity"/>
    <property type="evidence" value="ECO:0007669"/>
    <property type="project" value="UniProtKB-UniRule"/>
</dbReference>
<dbReference type="GO" id="GO:0000049">
    <property type="term" value="F:tRNA binding"/>
    <property type="evidence" value="ECO:0007669"/>
    <property type="project" value="UniProtKB-KW"/>
</dbReference>
<dbReference type="GO" id="GO:0006435">
    <property type="term" value="P:threonyl-tRNA aminoacylation"/>
    <property type="evidence" value="ECO:0007669"/>
    <property type="project" value="UniProtKB-UniRule"/>
</dbReference>
<dbReference type="CDD" id="cd00860">
    <property type="entry name" value="ThrRS_anticodon"/>
    <property type="match status" value="1"/>
</dbReference>
<dbReference type="CDD" id="cd00771">
    <property type="entry name" value="ThrRS_core"/>
    <property type="match status" value="1"/>
</dbReference>
<dbReference type="FunFam" id="3.30.930.10:FF:000002">
    <property type="entry name" value="Threonine--tRNA ligase"/>
    <property type="match status" value="1"/>
</dbReference>
<dbReference type="FunFam" id="3.40.50.800:FF:000001">
    <property type="entry name" value="Threonine--tRNA ligase"/>
    <property type="match status" value="1"/>
</dbReference>
<dbReference type="FunFam" id="3.30.980.10:FF:000005">
    <property type="entry name" value="Threonyl-tRNA synthetase, mitochondrial"/>
    <property type="match status" value="1"/>
</dbReference>
<dbReference type="Gene3D" id="3.30.54.20">
    <property type="match status" value="1"/>
</dbReference>
<dbReference type="Gene3D" id="3.40.50.800">
    <property type="entry name" value="Anticodon-binding domain"/>
    <property type="match status" value="1"/>
</dbReference>
<dbReference type="Gene3D" id="3.30.930.10">
    <property type="entry name" value="Bira Bifunctional Protein, Domain 2"/>
    <property type="match status" value="1"/>
</dbReference>
<dbReference type="Gene3D" id="3.30.980.10">
    <property type="entry name" value="Threonyl-trna Synthetase, Chain A, domain 2"/>
    <property type="match status" value="1"/>
</dbReference>
<dbReference type="HAMAP" id="MF_00184">
    <property type="entry name" value="Thr_tRNA_synth"/>
    <property type="match status" value="1"/>
</dbReference>
<dbReference type="InterPro" id="IPR002314">
    <property type="entry name" value="aa-tRNA-synt_IIb"/>
</dbReference>
<dbReference type="InterPro" id="IPR006195">
    <property type="entry name" value="aa-tRNA-synth_II"/>
</dbReference>
<dbReference type="InterPro" id="IPR045864">
    <property type="entry name" value="aa-tRNA-synth_II/BPL/LPL"/>
</dbReference>
<dbReference type="InterPro" id="IPR004154">
    <property type="entry name" value="Anticodon-bd"/>
</dbReference>
<dbReference type="InterPro" id="IPR036621">
    <property type="entry name" value="Anticodon-bd_dom_sf"/>
</dbReference>
<dbReference type="InterPro" id="IPR002320">
    <property type="entry name" value="Thr-tRNA-ligase_IIa"/>
</dbReference>
<dbReference type="InterPro" id="IPR018163">
    <property type="entry name" value="Thr/Ala-tRNA-synth_IIc_edit"/>
</dbReference>
<dbReference type="InterPro" id="IPR047246">
    <property type="entry name" value="ThrRS_anticodon"/>
</dbReference>
<dbReference type="InterPro" id="IPR033728">
    <property type="entry name" value="ThrRS_core"/>
</dbReference>
<dbReference type="InterPro" id="IPR012947">
    <property type="entry name" value="tRNA_SAD"/>
</dbReference>
<dbReference type="NCBIfam" id="TIGR00418">
    <property type="entry name" value="thrS"/>
    <property type="match status" value="1"/>
</dbReference>
<dbReference type="PANTHER" id="PTHR11451:SF44">
    <property type="entry name" value="THREONINE--TRNA LIGASE, CHLOROPLASTIC_MITOCHONDRIAL 2"/>
    <property type="match status" value="1"/>
</dbReference>
<dbReference type="PANTHER" id="PTHR11451">
    <property type="entry name" value="THREONINE-TRNA LIGASE"/>
    <property type="match status" value="1"/>
</dbReference>
<dbReference type="Pfam" id="PF03129">
    <property type="entry name" value="HGTP_anticodon"/>
    <property type="match status" value="1"/>
</dbReference>
<dbReference type="Pfam" id="PF00587">
    <property type="entry name" value="tRNA-synt_2b"/>
    <property type="match status" value="1"/>
</dbReference>
<dbReference type="Pfam" id="PF07973">
    <property type="entry name" value="tRNA_SAD"/>
    <property type="match status" value="1"/>
</dbReference>
<dbReference type="PRINTS" id="PR01047">
    <property type="entry name" value="TRNASYNTHTHR"/>
</dbReference>
<dbReference type="SMART" id="SM00863">
    <property type="entry name" value="tRNA_SAD"/>
    <property type="match status" value="1"/>
</dbReference>
<dbReference type="SUPFAM" id="SSF52954">
    <property type="entry name" value="Class II aaRS ABD-related"/>
    <property type="match status" value="1"/>
</dbReference>
<dbReference type="SUPFAM" id="SSF55681">
    <property type="entry name" value="Class II aaRS and biotin synthetases"/>
    <property type="match status" value="1"/>
</dbReference>
<dbReference type="SUPFAM" id="SSF55186">
    <property type="entry name" value="ThrRS/AlaRS common domain"/>
    <property type="match status" value="1"/>
</dbReference>
<dbReference type="PROSITE" id="PS50862">
    <property type="entry name" value="AA_TRNA_LIGASE_II"/>
    <property type="match status" value="1"/>
</dbReference>
<organism>
    <name type="scientific">Borrelia duttonii (strain Ly)</name>
    <dbReference type="NCBI Taxonomy" id="412419"/>
    <lineage>
        <taxon>Bacteria</taxon>
        <taxon>Pseudomonadati</taxon>
        <taxon>Spirochaetota</taxon>
        <taxon>Spirochaetia</taxon>
        <taxon>Spirochaetales</taxon>
        <taxon>Borreliaceae</taxon>
        <taxon>Borrelia</taxon>
    </lineage>
</organism>
<keyword id="KW-0030">Aminoacyl-tRNA synthetase</keyword>
<keyword id="KW-0067">ATP-binding</keyword>
<keyword id="KW-0963">Cytoplasm</keyword>
<keyword id="KW-0436">Ligase</keyword>
<keyword id="KW-0479">Metal-binding</keyword>
<keyword id="KW-0547">Nucleotide-binding</keyword>
<keyword id="KW-0648">Protein biosynthesis</keyword>
<keyword id="KW-0694">RNA-binding</keyword>
<keyword id="KW-0820">tRNA-binding</keyword>
<keyword id="KW-0862">Zinc</keyword>
<proteinExistence type="inferred from homology"/>
<accession>B5RMR3</accession>
<name>SYT_BORDL</name>